<reference evidence="6 8" key="1">
    <citation type="journal article" date="1993" name="Genes Dev.">
        <title>Induction of the Xenopus organizer: expression and regulation of Xnot, a novel FGF and activin-regulated homeo box gene.</title>
        <authorList>
            <person name="von Dassow G."/>
            <person name="Schmidt J.E."/>
            <person name="Kimelman D."/>
        </authorList>
    </citation>
    <scope>NUCLEOTIDE SEQUENCE [MRNA]</scope>
    <scope>TISSUE SPECIFICITY</scope>
    <scope>DEVELOPMENTAL STAGE</scope>
    <scope>INDUCTION</scope>
    <source>
        <tissue evidence="5">Embryo</tissue>
    </source>
</reference>
<reference evidence="7" key="2">
    <citation type="submission" date="2006-09" db="EMBL/GenBank/DDBJ databases">
        <authorList>
            <consortium name="NIH - Xenopus Gene Collection (XGC) project"/>
        </authorList>
    </citation>
    <scope>NUCLEOTIDE SEQUENCE [LARGE SCALE MRNA]</scope>
    <source>
        <tissue evidence="7">Neurula</tissue>
    </source>
</reference>
<reference evidence="6" key="3">
    <citation type="journal article" date="1999" name="Development">
        <title>derriere: a TGF-beta family member required for posterior development in Xenopus.</title>
        <authorList>
            <person name="Sun B.I."/>
            <person name="Bush S.M."/>
            <person name="Collins-Racie L.A."/>
            <person name="LaVallie E.R."/>
            <person name="DiBlasio-Smith E.A."/>
            <person name="Wolfman N.M."/>
            <person name="McCoy J.M."/>
            <person name="Sive H.L."/>
        </authorList>
    </citation>
    <scope>INDUCTION</scope>
</reference>
<reference evidence="6" key="4">
    <citation type="journal article" date="2001" name="Development">
        <title>Role of Goosecoid, Xnot and Wnt antagonists in the maintenance of the notochord genetic programme in Xenopus gastrulae.</title>
        <authorList>
            <person name="Yasuo H."/>
            <person name="Lemaire P."/>
        </authorList>
    </citation>
    <scope>FUNCTION</scope>
</reference>
<accession>Q06615</accession>
<accession>Q0IHA7</accession>
<comment type="function">
    <text evidence="4">Transcriptional repressor. Plays a fundamental role in notochord formation, acting within the mesodermal region.</text>
</comment>
<comment type="subcellular location">
    <subcellularLocation>
        <location evidence="6">Nucleus</location>
    </subcellularLocation>
</comment>
<comment type="tissue specificity">
    <text evidence="5">Expressed throughout the embryo during pre-gastrula stages. Localized to the dorsal lip of the blastopore (Spemann organizer) during early gastrulation, after which expression continues in tissues derived from the organizer. Expressed in the notochord during mid-gastrulation. During neurulation, expressed in the notochord, archenteron roof and the prospective floor plate. Also expressed in the region that will become the epiphysis, the pineal body precursor. By the early tailbud stages, expression is limited to posterior notochord and floor plate before becoming restricted to the tip of the tail in the tadpole.</text>
</comment>
<comment type="developmental stage">
    <text evidence="5">Expressed both maternally and zygotically. Expression increases markedly at the mid-blastula transition (MBT) and peaks at the onset of gastrulation before declining rapidly during the gastrula stages. Another decrease in expression levels occurs towards the end of the neurula stages, although expression is retained into the late tailbud stages.</text>
</comment>
<comment type="induction">
    <text evidence="3 5">By activin, derriere, fgf2/bFGF and wnt8. Repressed by bmp4/dvr-4.</text>
</comment>
<comment type="sequence caution" evidence="6">
    <conflict type="erroneous initiation">
        <sequence resource="EMBL-CDS" id="AAI23238"/>
    </conflict>
</comment>
<gene>
    <name type="primary">noto</name>
    <name type="synonym">not</name>
</gene>
<dbReference type="EMBL" id="Z19577">
    <property type="protein sequence ID" value="CAA79629.1"/>
    <property type="molecule type" value="mRNA"/>
</dbReference>
<dbReference type="EMBL" id="BC123237">
    <property type="protein sequence ID" value="AAI23238.1"/>
    <property type="status" value="ALT_INIT"/>
    <property type="molecule type" value="mRNA"/>
</dbReference>
<dbReference type="PIR" id="A46305">
    <property type="entry name" value="A46305"/>
</dbReference>
<dbReference type="RefSeq" id="NP_001081625.1">
    <property type="nucleotide sequence ID" value="NM_001088156.1"/>
</dbReference>
<dbReference type="SMR" id="Q06615"/>
<dbReference type="GeneID" id="397961"/>
<dbReference type="KEGG" id="xla:397961"/>
<dbReference type="AGR" id="Xenbase:XB-GENE-865187"/>
<dbReference type="CTD" id="397961"/>
<dbReference type="Xenbase" id="XB-GENE-865187">
    <property type="gene designation" value="not.S"/>
</dbReference>
<dbReference type="OrthoDB" id="6159439at2759"/>
<dbReference type="Proteomes" id="UP000186698">
    <property type="component" value="Chromosome 1S"/>
</dbReference>
<dbReference type="Bgee" id="397961">
    <property type="expression patterns" value="Expressed in gastrula and 7 other cell types or tissues"/>
</dbReference>
<dbReference type="GO" id="GO:0005634">
    <property type="term" value="C:nucleus"/>
    <property type="evidence" value="ECO:0000318"/>
    <property type="project" value="GO_Central"/>
</dbReference>
<dbReference type="GO" id="GO:0000981">
    <property type="term" value="F:DNA-binding transcription factor activity, RNA polymerase II-specific"/>
    <property type="evidence" value="ECO:0000318"/>
    <property type="project" value="GO_Central"/>
</dbReference>
<dbReference type="GO" id="GO:0000978">
    <property type="term" value="F:RNA polymerase II cis-regulatory region sequence-specific DNA binding"/>
    <property type="evidence" value="ECO:0000318"/>
    <property type="project" value="GO_Central"/>
</dbReference>
<dbReference type="GO" id="GO:0007417">
    <property type="term" value="P:central nervous system development"/>
    <property type="evidence" value="ECO:0000318"/>
    <property type="project" value="GO_Central"/>
</dbReference>
<dbReference type="GO" id="GO:0045892">
    <property type="term" value="P:negative regulation of DNA-templated transcription"/>
    <property type="evidence" value="ECO:0000314"/>
    <property type="project" value="UniProtKB"/>
</dbReference>
<dbReference type="GO" id="GO:0030182">
    <property type="term" value="P:neuron differentiation"/>
    <property type="evidence" value="ECO:0000318"/>
    <property type="project" value="GO_Central"/>
</dbReference>
<dbReference type="GO" id="GO:0014028">
    <property type="term" value="P:notochord formation"/>
    <property type="evidence" value="ECO:0000315"/>
    <property type="project" value="UniProtKB"/>
</dbReference>
<dbReference type="GO" id="GO:0006357">
    <property type="term" value="P:regulation of transcription by RNA polymerase II"/>
    <property type="evidence" value="ECO:0000318"/>
    <property type="project" value="GO_Central"/>
</dbReference>
<dbReference type="CDD" id="cd00086">
    <property type="entry name" value="homeodomain"/>
    <property type="match status" value="1"/>
</dbReference>
<dbReference type="FunFam" id="1.10.10.60:FF:000450">
    <property type="entry name" value="Homeobox protein notochord"/>
    <property type="match status" value="1"/>
</dbReference>
<dbReference type="Gene3D" id="1.10.10.60">
    <property type="entry name" value="Homeodomain-like"/>
    <property type="match status" value="1"/>
</dbReference>
<dbReference type="InterPro" id="IPR050877">
    <property type="entry name" value="EMX-VAX-Noto_Homeobox_TFs"/>
</dbReference>
<dbReference type="InterPro" id="IPR001356">
    <property type="entry name" value="HD"/>
</dbReference>
<dbReference type="InterPro" id="IPR020479">
    <property type="entry name" value="HD_metazoa"/>
</dbReference>
<dbReference type="InterPro" id="IPR017970">
    <property type="entry name" value="Homeobox_CS"/>
</dbReference>
<dbReference type="InterPro" id="IPR009057">
    <property type="entry name" value="Homeodomain-like_sf"/>
</dbReference>
<dbReference type="InterPro" id="IPR000047">
    <property type="entry name" value="HTH_motif"/>
</dbReference>
<dbReference type="PANTHER" id="PTHR24339:SF67">
    <property type="entry name" value="GNOT1 HOMEODOMAIN PROTEIN-RELATED"/>
    <property type="match status" value="1"/>
</dbReference>
<dbReference type="PANTHER" id="PTHR24339">
    <property type="entry name" value="HOMEOBOX PROTEIN EMX-RELATED"/>
    <property type="match status" value="1"/>
</dbReference>
<dbReference type="Pfam" id="PF00046">
    <property type="entry name" value="Homeodomain"/>
    <property type="match status" value="1"/>
</dbReference>
<dbReference type="PRINTS" id="PR00024">
    <property type="entry name" value="HOMEOBOX"/>
</dbReference>
<dbReference type="PRINTS" id="PR00031">
    <property type="entry name" value="HTHREPRESSR"/>
</dbReference>
<dbReference type="SMART" id="SM00389">
    <property type="entry name" value="HOX"/>
    <property type="match status" value="1"/>
</dbReference>
<dbReference type="SUPFAM" id="SSF46689">
    <property type="entry name" value="Homeodomain-like"/>
    <property type="match status" value="1"/>
</dbReference>
<dbReference type="PROSITE" id="PS00027">
    <property type="entry name" value="HOMEOBOX_1"/>
    <property type="match status" value="1"/>
</dbReference>
<dbReference type="PROSITE" id="PS50071">
    <property type="entry name" value="HOMEOBOX_2"/>
    <property type="match status" value="1"/>
</dbReference>
<organism>
    <name type="scientific">Xenopus laevis</name>
    <name type="common">African clawed frog</name>
    <dbReference type="NCBI Taxonomy" id="8355"/>
    <lineage>
        <taxon>Eukaryota</taxon>
        <taxon>Metazoa</taxon>
        <taxon>Chordata</taxon>
        <taxon>Craniata</taxon>
        <taxon>Vertebrata</taxon>
        <taxon>Euteleostomi</taxon>
        <taxon>Amphibia</taxon>
        <taxon>Batrachia</taxon>
        <taxon>Anura</taxon>
        <taxon>Pipoidea</taxon>
        <taxon>Pipidae</taxon>
        <taxon>Xenopodinae</taxon>
        <taxon>Xenopus</taxon>
        <taxon>Xenopus</taxon>
    </lineage>
</organism>
<keyword id="KW-0217">Developmental protein</keyword>
<keyword id="KW-0238">DNA-binding</keyword>
<keyword id="KW-0371">Homeobox</keyword>
<keyword id="KW-0539">Nucleus</keyword>
<keyword id="KW-1185">Reference proteome</keyword>
<keyword id="KW-0678">Repressor</keyword>
<keyword id="KW-0804">Transcription</keyword>
<keyword id="KW-0805">Transcription regulation</keyword>
<name>NOTO_XENLA</name>
<protein>
    <recommendedName>
        <fullName>Homeobox protein notochord</fullName>
        <shortName>Xnot</shortName>
    </recommendedName>
</protein>
<feature type="chain" id="PRO_0000274813" description="Homeobox protein notochord">
    <location>
        <begin position="1"/>
        <end position="236"/>
    </location>
</feature>
<feature type="DNA-binding region" description="Homeobox" evidence="1">
    <location>
        <begin position="138"/>
        <end position="197"/>
    </location>
</feature>
<feature type="region of interest" description="Disordered" evidence="2">
    <location>
        <begin position="209"/>
        <end position="236"/>
    </location>
</feature>
<feature type="compositionally biased region" description="Acidic residues" evidence="2">
    <location>
        <begin position="223"/>
        <end position="236"/>
    </location>
</feature>
<evidence type="ECO:0000255" key="1">
    <source>
        <dbReference type="PROSITE-ProRule" id="PRU00108"/>
    </source>
</evidence>
<evidence type="ECO:0000256" key="2">
    <source>
        <dbReference type="SAM" id="MobiDB-lite"/>
    </source>
</evidence>
<evidence type="ECO:0000269" key="3">
    <source>
    </source>
</evidence>
<evidence type="ECO:0000269" key="4">
    <source>
    </source>
</evidence>
<evidence type="ECO:0000269" key="5">
    <source>
    </source>
</evidence>
<evidence type="ECO:0000305" key="6"/>
<evidence type="ECO:0000312" key="7">
    <source>
        <dbReference type="EMBL" id="AAI23238.1"/>
    </source>
</evidence>
<evidence type="ECO:0000312" key="8">
    <source>
        <dbReference type="EMBL" id="CAA79629.1"/>
    </source>
</evidence>
<sequence>MLHSPVFPAFGHHLAQHPAMPLAMELPRTPKASFNIDSILSRTDRPASKLSMEMPSWQPPSPPSMPYRYSYGMMPYPPVWLIKPTVGYPNMAQQQPMRMPRGECLCPDPTCKERVLPFSHCPNGAMNPLSWRTGPCKMKRIRTVFTPEQLEKLEKEFLKQQYMVGTERVDLASTLNLTETQVKVWFQNRRIKWRKQSLEQKKAKLSQFGVIPADSSDHTDDSRETEEDEDDLDVEL</sequence>
<proteinExistence type="evidence at transcript level"/>